<keyword id="KW-0004">4Fe-4S</keyword>
<keyword id="KW-0028">Amino-acid biosynthesis</keyword>
<keyword id="KW-0100">Branched-chain amino acid biosynthesis</keyword>
<keyword id="KW-0408">Iron</keyword>
<keyword id="KW-0411">Iron-sulfur</keyword>
<keyword id="KW-0432">Leucine biosynthesis</keyword>
<keyword id="KW-0456">Lyase</keyword>
<keyword id="KW-0479">Metal-binding</keyword>
<keyword id="KW-1185">Reference proteome</keyword>
<organism>
    <name type="scientific">Synechococcus sp. (strain JA-2-3B'a(2-13))</name>
    <name type="common">Cyanobacteria bacterium Yellowstone B-Prime</name>
    <dbReference type="NCBI Taxonomy" id="321332"/>
    <lineage>
        <taxon>Bacteria</taxon>
        <taxon>Bacillati</taxon>
        <taxon>Cyanobacteriota</taxon>
        <taxon>Cyanophyceae</taxon>
        <taxon>Synechococcales</taxon>
        <taxon>Synechococcaceae</taxon>
        <taxon>Synechococcus</taxon>
    </lineage>
</organism>
<gene>
    <name evidence="1" type="primary">leuC</name>
    <name type="ordered locus">CYB_0327</name>
</gene>
<sequence length="467" mass="50798">MSERTLFDKVWDAHTVRILPSGQTQLFIGLHLIHEVTSPQAFAMLRERHLPVLFPERTVATVDHIIPTDNRARPFADPLAEEMIQELERNCRQYGIRFYNSGSGRQGIVHVIAPEQGLTLPGMTIACGDSHTSTHGAFGAIAFGIGTSQVRDVLATQTLALSKLKVRRIEIHGKLGPGVYAKDVILHIIRKLGVKGGVGYAYEYGGSAIEAMSMEERMTLCNMSIEGGARCGYVNPDAVTFEYLRGREFAPQGSDWEEAVAWWKSLASDGNARYDDVVVFQAADIAPTVTWGITPGQGIGVDERIPAPEDLPESERELAKEAYAYMDLQPGDPIVGTPVDVCFIGSCTNGRLSDLREAAKIAKGRRVAPGVKAFVVPGSERVKQEAEQEGLREIFEAAGFEWRDPGCSMCLAMNPDRLVGRQISASSSNRNFKGRQGSPSGRTLLMSPAMVAAAAVSGKVVDVRTLL</sequence>
<comment type="function">
    <text evidence="1">Catalyzes the isomerization between 2-isopropylmalate and 3-isopropylmalate, via the formation of 2-isopropylmaleate.</text>
</comment>
<comment type="catalytic activity">
    <reaction evidence="1">
        <text>(2R,3S)-3-isopropylmalate = (2S)-2-isopropylmalate</text>
        <dbReference type="Rhea" id="RHEA:32287"/>
        <dbReference type="ChEBI" id="CHEBI:1178"/>
        <dbReference type="ChEBI" id="CHEBI:35121"/>
        <dbReference type="EC" id="4.2.1.33"/>
    </reaction>
</comment>
<comment type="cofactor">
    <cofactor evidence="1">
        <name>[4Fe-4S] cluster</name>
        <dbReference type="ChEBI" id="CHEBI:49883"/>
    </cofactor>
    <text evidence="1">Binds 1 [4Fe-4S] cluster per subunit.</text>
</comment>
<comment type="pathway">
    <text evidence="1">Amino-acid biosynthesis; L-leucine biosynthesis; L-leucine from 3-methyl-2-oxobutanoate: step 2/4.</text>
</comment>
<comment type="subunit">
    <text evidence="1">Heterodimer of LeuC and LeuD.</text>
</comment>
<comment type="similarity">
    <text evidence="1">Belongs to the aconitase/IPM isomerase family. LeuC type 1 subfamily.</text>
</comment>
<dbReference type="EC" id="4.2.1.33" evidence="1"/>
<dbReference type="EMBL" id="CP000240">
    <property type="protein sequence ID" value="ABD01325.1"/>
    <property type="molecule type" value="Genomic_DNA"/>
</dbReference>
<dbReference type="RefSeq" id="WP_011431994.1">
    <property type="nucleotide sequence ID" value="NC_007776.1"/>
</dbReference>
<dbReference type="SMR" id="Q2JPG2"/>
<dbReference type="STRING" id="321332.CYB_0327"/>
<dbReference type="KEGG" id="cyb:CYB_0327"/>
<dbReference type="eggNOG" id="COG0065">
    <property type="taxonomic scope" value="Bacteria"/>
</dbReference>
<dbReference type="HOGENOM" id="CLU_006714_3_4_3"/>
<dbReference type="OrthoDB" id="9802769at2"/>
<dbReference type="UniPathway" id="UPA00048">
    <property type="reaction ID" value="UER00071"/>
</dbReference>
<dbReference type="Proteomes" id="UP000001938">
    <property type="component" value="Chromosome"/>
</dbReference>
<dbReference type="GO" id="GO:0003861">
    <property type="term" value="F:3-isopropylmalate dehydratase activity"/>
    <property type="evidence" value="ECO:0007669"/>
    <property type="project" value="UniProtKB-UniRule"/>
</dbReference>
<dbReference type="GO" id="GO:0051539">
    <property type="term" value="F:4 iron, 4 sulfur cluster binding"/>
    <property type="evidence" value="ECO:0007669"/>
    <property type="project" value="UniProtKB-KW"/>
</dbReference>
<dbReference type="GO" id="GO:0046872">
    <property type="term" value="F:metal ion binding"/>
    <property type="evidence" value="ECO:0007669"/>
    <property type="project" value="UniProtKB-KW"/>
</dbReference>
<dbReference type="GO" id="GO:0009098">
    <property type="term" value="P:L-leucine biosynthetic process"/>
    <property type="evidence" value="ECO:0007669"/>
    <property type="project" value="UniProtKB-UniRule"/>
</dbReference>
<dbReference type="CDD" id="cd01583">
    <property type="entry name" value="IPMI"/>
    <property type="match status" value="1"/>
</dbReference>
<dbReference type="Gene3D" id="3.30.499.10">
    <property type="entry name" value="Aconitase, domain 3"/>
    <property type="match status" value="2"/>
</dbReference>
<dbReference type="HAMAP" id="MF_01026">
    <property type="entry name" value="LeuC_type1"/>
    <property type="match status" value="1"/>
</dbReference>
<dbReference type="InterPro" id="IPR004430">
    <property type="entry name" value="3-IsopropMal_deHydase_lsu"/>
</dbReference>
<dbReference type="InterPro" id="IPR015931">
    <property type="entry name" value="Acnase/IPM_dHydase_lsu_aba_1/3"/>
</dbReference>
<dbReference type="InterPro" id="IPR001030">
    <property type="entry name" value="Acoase/IPM_deHydtase_lsu_aba"/>
</dbReference>
<dbReference type="InterPro" id="IPR018136">
    <property type="entry name" value="Aconitase_4Fe-4S_BS"/>
</dbReference>
<dbReference type="InterPro" id="IPR036008">
    <property type="entry name" value="Aconitase_4Fe-4S_dom"/>
</dbReference>
<dbReference type="InterPro" id="IPR050067">
    <property type="entry name" value="IPM_dehydratase_rel_enz"/>
</dbReference>
<dbReference type="InterPro" id="IPR033941">
    <property type="entry name" value="IPMI_cat"/>
</dbReference>
<dbReference type="NCBIfam" id="TIGR00170">
    <property type="entry name" value="leuC"/>
    <property type="match status" value="1"/>
</dbReference>
<dbReference type="NCBIfam" id="NF004016">
    <property type="entry name" value="PRK05478.1"/>
    <property type="match status" value="1"/>
</dbReference>
<dbReference type="NCBIfam" id="NF009116">
    <property type="entry name" value="PRK12466.1"/>
    <property type="match status" value="1"/>
</dbReference>
<dbReference type="PANTHER" id="PTHR43822:SF9">
    <property type="entry name" value="3-ISOPROPYLMALATE DEHYDRATASE"/>
    <property type="match status" value="1"/>
</dbReference>
<dbReference type="PANTHER" id="PTHR43822">
    <property type="entry name" value="HOMOACONITASE, MITOCHONDRIAL-RELATED"/>
    <property type="match status" value="1"/>
</dbReference>
<dbReference type="Pfam" id="PF00330">
    <property type="entry name" value="Aconitase"/>
    <property type="match status" value="1"/>
</dbReference>
<dbReference type="PRINTS" id="PR00415">
    <property type="entry name" value="ACONITASE"/>
</dbReference>
<dbReference type="SUPFAM" id="SSF53732">
    <property type="entry name" value="Aconitase iron-sulfur domain"/>
    <property type="match status" value="1"/>
</dbReference>
<dbReference type="PROSITE" id="PS00450">
    <property type="entry name" value="ACONITASE_1"/>
    <property type="match status" value="1"/>
</dbReference>
<dbReference type="PROSITE" id="PS01244">
    <property type="entry name" value="ACONITASE_2"/>
    <property type="match status" value="1"/>
</dbReference>
<feature type="chain" id="PRO_1000063622" description="3-isopropylmalate dehydratase large subunit">
    <location>
        <begin position="1"/>
        <end position="467"/>
    </location>
</feature>
<feature type="binding site" evidence="1">
    <location>
        <position position="347"/>
    </location>
    <ligand>
        <name>[4Fe-4S] cluster</name>
        <dbReference type="ChEBI" id="CHEBI:49883"/>
    </ligand>
</feature>
<feature type="binding site" evidence="1">
    <location>
        <position position="407"/>
    </location>
    <ligand>
        <name>[4Fe-4S] cluster</name>
        <dbReference type="ChEBI" id="CHEBI:49883"/>
    </ligand>
</feature>
<feature type="binding site" evidence="1">
    <location>
        <position position="410"/>
    </location>
    <ligand>
        <name>[4Fe-4S] cluster</name>
        <dbReference type="ChEBI" id="CHEBI:49883"/>
    </ligand>
</feature>
<protein>
    <recommendedName>
        <fullName evidence="1">3-isopropylmalate dehydratase large subunit</fullName>
        <ecNumber evidence="1">4.2.1.33</ecNumber>
    </recommendedName>
    <alternativeName>
        <fullName evidence="1">Alpha-IPM isomerase</fullName>
        <shortName evidence="1">IPMI</shortName>
    </alternativeName>
    <alternativeName>
        <fullName evidence="1">Isopropylmalate isomerase</fullName>
    </alternativeName>
</protein>
<accession>Q2JPG2</accession>
<reference key="1">
    <citation type="journal article" date="2007" name="ISME J.">
        <title>Population level functional diversity in a microbial community revealed by comparative genomic and metagenomic analyses.</title>
        <authorList>
            <person name="Bhaya D."/>
            <person name="Grossman A.R."/>
            <person name="Steunou A.-S."/>
            <person name="Khuri N."/>
            <person name="Cohan F.M."/>
            <person name="Hamamura N."/>
            <person name="Melendrez M.C."/>
            <person name="Bateson M.M."/>
            <person name="Ward D.M."/>
            <person name="Heidelberg J.F."/>
        </authorList>
    </citation>
    <scope>NUCLEOTIDE SEQUENCE [LARGE SCALE GENOMIC DNA]</scope>
    <source>
        <strain>JA-2-3B'a(2-13)</strain>
    </source>
</reference>
<name>LEUC_SYNJB</name>
<evidence type="ECO:0000255" key="1">
    <source>
        <dbReference type="HAMAP-Rule" id="MF_01026"/>
    </source>
</evidence>
<proteinExistence type="inferred from homology"/>